<dbReference type="EC" id="2.6.1.42"/>
<dbReference type="EMBL" id="CP000480">
    <property type="protein sequence ID" value="ABK74679.1"/>
    <property type="molecule type" value="Genomic_DNA"/>
</dbReference>
<dbReference type="EMBL" id="CP001663">
    <property type="protein sequence ID" value="AFP40633.1"/>
    <property type="molecule type" value="Genomic_DNA"/>
</dbReference>
<dbReference type="RefSeq" id="WP_011729696.1">
    <property type="nucleotide sequence ID" value="NZ_SIJM01000003.1"/>
</dbReference>
<dbReference type="RefSeq" id="YP_888554.1">
    <property type="nucleotide sequence ID" value="NC_008596.1"/>
</dbReference>
<dbReference type="PDB" id="3DTF">
    <property type="method" value="X-ray"/>
    <property type="resolution" value="2.20 A"/>
    <property type="chains" value="A/B=2-368"/>
</dbReference>
<dbReference type="PDB" id="3DTG">
    <property type="method" value="X-ray"/>
    <property type="resolution" value="1.90 A"/>
    <property type="chains" value="A/B=2-368"/>
</dbReference>
<dbReference type="PDB" id="3JZ6">
    <property type="method" value="X-ray"/>
    <property type="resolution" value="1.90 A"/>
    <property type="chains" value="A/B=2-368"/>
</dbReference>
<dbReference type="PDBsum" id="3DTF"/>
<dbReference type="PDBsum" id="3DTG"/>
<dbReference type="PDBsum" id="3JZ6"/>
<dbReference type="SMR" id="A0R066"/>
<dbReference type="STRING" id="246196.MSMEG_4276"/>
<dbReference type="PaxDb" id="246196-MSMEI_4176"/>
<dbReference type="KEGG" id="msb:LJ00_21200"/>
<dbReference type="KEGG" id="msg:MSMEI_4176"/>
<dbReference type="KEGG" id="msm:MSMEG_4276"/>
<dbReference type="PATRIC" id="fig|246196.19.peg.4197"/>
<dbReference type="eggNOG" id="COG0115">
    <property type="taxonomic scope" value="Bacteria"/>
</dbReference>
<dbReference type="OrthoDB" id="9804984at2"/>
<dbReference type="BRENDA" id="2.6.1.42">
    <property type="organism ID" value="3512"/>
</dbReference>
<dbReference type="UniPathway" id="UPA00047">
    <property type="reaction ID" value="UER00058"/>
</dbReference>
<dbReference type="UniPathway" id="UPA00048">
    <property type="reaction ID" value="UER00073"/>
</dbReference>
<dbReference type="UniPathway" id="UPA00049">
    <property type="reaction ID" value="UER00062"/>
</dbReference>
<dbReference type="EvolutionaryTrace" id="A0R066"/>
<dbReference type="Proteomes" id="UP000000757">
    <property type="component" value="Chromosome"/>
</dbReference>
<dbReference type="Proteomes" id="UP000006158">
    <property type="component" value="Chromosome"/>
</dbReference>
<dbReference type="GO" id="GO:0004084">
    <property type="term" value="F:branched-chain-amino-acid transaminase activity"/>
    <property type="evidence" value="ECO:0000314"/>
    <property type="project" value="UniProtKB"/>
</dbReference>
<dbReference type="GO" id="GO:0052656">
    <property type="term" value="F:L-isoleucine-2-oxoglutarate transaminase activity"/>
    <property type="evidence" value="ECO:0007669"/>
    <property type="project" value="RHEA"/>
</dbReference>
<dbReference type="GO" id="GO:0052654">
    <property type="term" value="F:L-leucine-2-oxoglutarate transaminase activity"/>
    <property type="evidence" value="ECO:0007669"/>
    <property type="project" value="RHEA"/>
</dbReference>
<dbReference type="GO" id="GO:0052655">
    <property type="term" value="F:L-valine-2-oxoglutarate transaminase activity"/>
    <property type="evidence" value="ECO:0007669"/>
    <property type="project" value="RHEA"/>
</dbReference>
<dbReference type="GO" id="GO:0030170">
    <property type="term" value="F:pyridoxal phosphate binding"/>
    <property type="evidence" value="ECO:0000314"/>
    <property type="project" value="UniProtKB"/>
</dbReference>
<dbReference type="GO" id="GO:0009081">
    <property type="term" value="P:branched-chain amino acid metabolic process"/>
    <property type="evidence" value="ECO:0000314"/>
    <property type="project" value="UniProtKB"/>
</dbReference>
<dbReference type="GO" id="GO:0009097">
    <property type="term" value="P:isoleucine biosynthetic process"/>
    <property type="evidence" value="ECO:0007669"/>
    <property type="project" value="UniProtKB-UniPathway"/>
</dbReference>
<dbReference type="GO" id="GO:0009098">
    <property type="term" value="P:L-leucine biosynthetic process"/>
    <property type="evidence" value="ECO:0007669"/>
    <property type="project" value="UniProtKB-UniPathway"/>
</dbReference>
<dbReference type="GO" id="GO:0009099">
    <property type="term" value="P:L-valine biosynthetic process"/>
    <property type="evidence" value="ECO:0007669"/>
    <property type="project" value="UniProtKB-UniPathway"/>
</dbReference>
<dbReference type="GO" id="GO:0018272">
    <property type="term" value="P:protein-pyridoxal-5-phosphate linkage via peptidyl-N6-pyridoxal phosphate-L-lysine"/>
    <property type="evidence" value="ECO:0000314"/>
    <property type="project" value="UniProtKB"/>
</dbReference>
<dbReference type="CDD" id="cd01557">
    <property type="entry name" value="BCAT_beta_family"/>
    <property type="match status" value="1"/>
</dbReference>
<dbReference type="FunFam" id="3.20.10.10:FF:000009">
    <property type="entry name" value="Branched-chain-amino-acid aminotransferase"/>
    <property type="match status" value="1"/>
</dbReference>
<dbReference type="Gene3D" id="3.30.470.10">
    <property type="match status" value="1"/>
</dbReference>
<dbReference type="Gene3D" id="3.20.10.10">
    <property type="entry name" value="D-amino Acid Aminotransferase, subunit A, domain 2"/>
    <property type="match status" value="1"/>
</dbReference>
<dbReference type="InterPro" id="IPR001544">
    <property type="entry name" value="Aminotrans_IV"/>
</dbReference>
<dbReference type="InterPro" id="IPR018300">
    <property type="entry name" value="Aminotrans_IV_CS"/>
</dbReference>
<dbReference type="InterPro" id="IPR036038">
    <property type="entry name" value="Aminotransferase-like"/>
</dbReference>
<dbReference type="InterPro" id="IPR005786">
    <property type="entry name" value="B_amino_transII"/>
</dbReference>
<dbReference type="InterPro" id="IPR043132">
    <property type="entry name" value="BCAT-like_C"/>
</dbReference>
<dbReference type="InterPro" id="IPR043131">
    <property type="entry name" value="BCAT-like_N"/>
</dbReference>
<dbReference type="InterPro" id="IPR033939">
    <property type="entry name" value="BCAT_family"/>
</dbReference>
<dbReference type="NCBIfam" id="TIGR01123">
    <property type="entry name" value="ilvE_II"/>
    <property type="match status" value="1"/>
</dbReference>
<dbReference type="NCBIfam" id="NF009897">
    <property type="entry name" value="PRK13357.1"/>
    <property type="match status" value="1"/>
</dbReference>
<dbReference type="PANTHER" id="PTHR11825:SF44">
    <property type="entry name" value="BRANCHED-CHAIN-AMINO-ACID AMINOTRANSFERASE"/>
    <property type="match status" value="1"/>
</dbReference>
<dbReference type="PANTHER" id="PTHR11825">
    <property type="entry name" value="SUBGROUP IIII AMINOTRANSFERASE"/>
    <property type="match status" value="1"/>
</dbReference>
<dbReference type="Pfam" id="PF01063">
    <property type="entry name" value="Aminotran_4"/>
    <property type="match status" value="1"/>
</dbReference>
<dbReference type="PIRSF" id="PIRSF006468">
    <property type="entry name" value="BCAT1"/>
    <property type="match status" value="1"/>
</dbReference>
<dbReference type="SUPFAM" id="SSF56752">
    <property type="entry name" value="D-aminoacid aminotransferase-like PLP-dependent enzymes"/>
    <property type="match status" value="1"/>
</dbReference>
<dbReference type="PROSITE" id="PS00770">
    <property type="entry name" value="AA_TRANSFER_CLASS_4"/>
    <property type="match status" value="1"/>
</dbReference>
<gene>
    <name type="primary">ilvE</name>
    <name type="ordered locus">MSMEG_4276</name>
    <name type="ordered locus">MSMEI_4176</name>
</gene>
<feature type="chain" id="PRO_0000396109" description="Branched-chain-amino-acid aminotransferase">
    <location>
        <begin position="1"/>
        <end position="368"/>
    </location>
</feature>
<feature type="binding site" evidence="2">
    <location>
        <position position="101"/>
    </location>
    <ligand>
        <name>pyridoxal 5'-phosphate</name>
        <dbReference type="ChEBI" id="CHEBI:597326"/>
    </ligand>
</feature>
<feature type="binding site" evidence="2">
    <location>
        <position position="209"/>
    </location>
    <ligand>
        <name>pyridoxal 5'-phosphate</name>
        <dbReference type="ChEBI" id="CHEBI:597326"/>
    </ligand>
</feature>
<feature type="binding site">
    <location>
        <begin position="271"/>
        <end position="272"/>
    </location>
    <ligand>
        <name>pyridoxal 5'-phosphate</name>
        <dbReference type="ChEBI" id="CHEBI:597326"/>
    </ligand>
</feature>
<feature type="binding site" evidence="2">
    <location>
        <position position="314"/>
    </location>
    <ligand>
        <name>pyridoxal 5'-phosphate</name>
        <dbReference type="ChEBI" id="CHEBI:597326"/>
    </ligand>
</feature>
<feature type="modified residue" description="N6-(pyridoxal phosphate)lysine">
    <location>
        <position position="204"/>
    </location>
</feature>
<feature type="cross-link" description="Isoglutamyl lysine isopeptide (Lys-Gln) (interchain with Q-Cter in protein Pup)" evidence="1">
    <location>
        <position position="299"/>
    </location>
</feature>
<feature type="helix" evidence="4">
    <location>
        <begin position="19"/>
        <end position="27"/>
    </location>
</feature>
<feature type="strand" evidence="4">
    <location>
        <begin position="31"/>
        <end position="33"/>
    </location>
</feature>
<feature type="strand" evidence="4">
    <location>
        <begin position="37"/>
        <end position="45"/>
    </location>
</feature>
<feature type="turn" evidence="4">
    <location>
        <begin position="46"/>
        <end position="48"/>
    </location>
</feature>
<feature type="strand" evidence="4">
    <location>
        <begin position="49"/>
        <end position="58"/>
    </location>
</feature>
<feature type="strand" evidence="4">
    <location>
        <begin position="61"/>
        <end position="63"/>
    </location>
</feature>
<feature type="helix" evidence="4">
    <location>
        <begin position="69"/>
        <end position="72"/>
    </location>
</feature>
<feature type="strand" evidence="4">
    <location>
        <begin position="75"/>
        <end position="77"/>
    </location>
</feature>
<feature type="strand" evidence="4">
    <location>
        <begin position="80"/>
        <end position="84"/>
    </location>
</feature>
<feature type="strand" evidence="4">
    <location>
        <begin position="90"/>
        <end position="94"/>
    </location>
</feature>
<feature type="helix" evidence="4">
    <location>
        <begin position="95"/>
        <end position="108"/>
    </location>
</feature>
<feature type="helix" evidence="4">
    <location>
        <begin position="116"/>
        <end position="130"/>
    </location>
</feature>
<feature type="helix" evidence="4">
    <location>
        <begin position="131"/>
        <end position="133"/>
    </location>
</feature>
<feature type="strand" evidence="4">
    <location>
        <begin position="137"/>
        <end position="140"/>
    </location>
</feature>
<feature type="strand" evidence="4">
    <location>
        <begin position="142"/>
        <end position="151"/>
    </location>
</feature>
<feature type="strand" evidence="4">
    <location>
        <begin position="162"/>
        <end position="174"/>
    </location>
</feature>
<feature type="strand" evidence="5">
    <location>
        <begin position="176"/>
        <end position="178"/>
    </location>
</feature>
<feature type="strand" evidence="4">
    <location>
        <begin position="180"/>
        <end position="182"/>
    </location>
</feature>
<feature type="strand" evidence="4">
    <location>
        <begin position="184"/>
        <end position="188"/>
    </location>
</feature>
<feature type="helix" evidence="4">
    <location>
        <begin position="206"/>
        <end position="221"/>
    </location>
</feature>
<feature type="strand" evidence="4">
    <location>
        <begin position="225"/>
        <end position="230"/>
    </location>
</feature>
<feature type="turn" evidence="4">
    <location>
        <begin position="232"/>
        <end position="234"/>
    </location>
</feature>
<feature type="strand" evidence="4">
    <location>
        <begin position="237"/>
        <end position="241"/>
    </location>
</feature>
<feature type="strand" evidence="4">
    <location>
        <begin position="244"/>
        <end position="251"/>
    </location>
</feature>
<feature type="helix" evidence="4">
    <location>
        <begin position="253"/>
        <end position="255"/>
    </location>
</feature>
<feature type="strand" evidence="4">
    <location>
        <begin position="257"/>
        <end position="260"/>
    </location>
</feature>
<feature type="strand" evidence="4">
    <location>
        <begin position="265"/>
        <end position="267"/>
    </location>
</feature>
<feature type="helix" evidence="4">
    <location>
        <begin position="271"/>
        <end position="283"/>
    </location>
</feature>
<feature type="strand" evidence="4">
    <location>
        <begin position="286"/>
        <end position="289"/>
    </location>
</feature>
<feature type="helix" evidence="4">
    <location>
        <begin position="294"/>
        <end position="303"/>
    </location>
</feature>
<feature type="strand" evidence="4">
    <location>
        <begin position="305"/>
        <end position="313"/>
    </location>
</feature>
<feature type="turn" evidence="4">
    <location>
        <begin position="314"/>
        <end position="316"/>
    </location>
</feature>
<feature type="strand" evidence="4">
    <location>
        <begin position="317"/>
        <end position="326"/>
    </location>
</feature>
<feature type="strand" evidence="4">
    <location>
        <begin position="329"/>
        <end position="332"/>
    </location>
</feature>
<feature type="helix" evidence="4">
    <location>
        <begin position="340"/>
        <end position="353"/>
    </location>
</feature>
<feature type="strand" evidence="4">
    <location>
        <begin position="364"/>
        <end position="366"/>
    </location>
</feature>
<organism>
    <name type="scientific">Mycolicibacterium smegmatis (strain ATCC 700084 / mc(2)155)</name>
    <name type="common">Mycobacterium smegmatis</name>
    <dbReference type="NCBI Taxonomy" id="246196"/>
    <lineage>
        <taxon>Bacteria</taxon>
        <taxon>Bacillati</taxon>
        <taxon>Actinomycetota</taxon>
        <taxon>Actinomycetes</taxon>
        <taxon>Mycobacteriales</taxon>
        <taxon>Mycobacteriaceae</taxon>
        <taxon>Mycolicibacterium</taxon>
    </lineage>
</organism>
<keyword id="KW-0002">3D-structure</keyword>
<keyword id="KW-0028">Amino-acid biosynthesis</keyword>
<keyword id="KW-0032">Aminotransferase</keyword>
<keyword id="KW-0100">Branched-chain amino acid biosynthesis</keyword>
<keyword id="KW-1017">Isopeptide bond</keyword>
<keyword id="KW-0663">Pyridoxal phosphate</keyword>
<keyword id="KW-1185">Reference proteome</keyword>
<keyword id="KW-0808">Transferase</keyword>
<keyword id="KW-0832">Ubl conjugation</keyword>
<proteinExistence type="evidence at protein level"/>
<accession>A0R066</accession>
<accession>I7FPI5</accession>
<reference key="1">
    <citation type="submission" date="2006-10" db="EMBL/GenBank/DDBJ databases">
        <authorList>
            <person name="Fleischmann R.D."/>
            <person name="Dodson R.J."/>
            <person name="Haft D.H."/>
            <person name="Merkel J.S."/>
            <person name="Nelson W.C."/>
            <person name="Fraser C.M."/>
        </authorList>
    </citation>
    <scope>NUCLEOTIDE SEQUENCE [LARGE SCALE GENOMIC DNA]</scope>
    <source>
        <strain>ATCC 700084 / mc(2)155</strain>
    </source>
</reference>
<reference key="2">
    <citation type="journal article" date="2007" name="Genome Biol.">
        <title>Interrupted coding sequences in Mycobacterium smegmatis: authentic mutations or sequencing errors?</title>
        <authorList>
            <person name="Deshayes C."/>
            <person name="Perrodou E."/>
            <person name="Gallien S."/>
            <person name="Euphrasie D."/>
            <person name="Schaeffer C."/>
            <person name="Van-Dorsselaer A."/>
            <person name="Poch O."/>
            <person name="Lecompte O."/>
            <person name="Reyrat J.-M."/>
        </authorList>
    </citation>
    <scope>NUCLEOTIDE SEQUENCE [LARGE SCALE GENOMIC DNA]</scope>
    <source>
        <strain>ATCC 700084 / mc(2)155</strain>
    </source>
</reference>
<reference key="3">
    <citation type="journal article" date="2009" name="Genome Res.">
        <title>Ortho-proteogenomics: multiple proteomes investigation through orthology and a new MS-based protocol.</title>
        <authorList>
            <person name="Gallien S."/>
            <person name="Perrodou E."/>
            <person name="Carapito C."/>
            <person name="Deshayes C."/>
            <person name="Reyrat J.-M."/>
            <person name="Van Dorsselaer A."/>
            <person name="Poch O."/>
            <person name="Schaeffer C."/>
            <person name="Lecompte O."/>
        </authorList>
    </citation>
    <scope>NUCLEOTIDE SEQUENCE [LARGE SCALE GENOMIC DNA]</scope>
    <source>
        <strain>ATCC 700084 / mc(2)155</strain>
    </source>
</reference>
<reference key="4">
    <citation type="journal article" date="2010" name="Mol. Biosyst.">
        <title>Expansion of the mycobacterial 'PUPylome'.</title>
        <authorList>
            <person name="Watrous J."/>
            <person name="Burns K."/>
            <person name="Liu W.T."/>
            <person name="Patel A."/>
            <person name="Hook V."/>
            <person name="Bafna V."/>
            <person name="Barry C.E. III"/>
            <person name="Bark S."/>
            <person name="Dorrestein P.C."/>
        </authorList>
    </citation>
    <scope>PUPYLATION AT LYS-299</scope>
    <scope>IDENTIFICATION BY MASS SPECTROMETRY</scope>
</reference>
<reference key="5">
    <citation type="journal article" date="2010" name="Acta Crystallogr. D">
        <title>Structural analysis of mycobacterial branched-chain aminotransferase: implications for inhibitor design.</title>
        <authorList>
            <person name="Castell A."/>
            <person name="Mille C."/>
            <person name="Unge T."/>
        </authorList>
    </citation>
    <scope>X-RAY CRYSTALLOGRAPHY (1.9 ANGSTROMS) IN COMPLEX WITH PYRIDOXAL PHOSPHATE</scope>
    <scope>FUNCTION AS AN AMINOTRANSFERASE</scope>
    <scope>COFACTOR</scope>
    <scope>SUBSTRATE SPECIFICITY</scope>
    <scope>ACTIVITY REGULATION</scope>
    <scope>SUBUNIT</scope>
</reference>
<evidence type="ECO:0000269" key="1">
    <source>
    </source>
</evidence>
<evidence type="ECO:0000269" key="2">
    <source>
    </source>
</evidence>
<evidence type="ECO:0000305" key="3"/>
<evidence type="ECO:0007829" key="4">
    <source>
        <dbReference type="PDB" id="3DTG"/>
    </source>
</evidence>
<evidence type="ECO:0007829" key="5">
    <source>
        <dbReference type="PDB" id="3JZ6"/>
    </source>
</evidence>
<name>ILVE_MYCS2</name>
<comment type="function">
    <text evidence="2">Catalyzes the reversible transfers of an amino group from glutamate to the alpha-ketoacid of the respective amino acid in the final step in the biosynthesis of branchedchain amino acids. The amino acids can be ranked in the following order with respect to their efficiency as amino donor: Leu &gt; Ile &gt; Val.</text>
</comment>
<comment type="catalytic activity">
    <reaction>
        <text>L-isoleucine + 2-oxoglutarate = (S)-3-methyl-2-oxopentanoate + L-glutamate</text>
        <dbReference type="Rhea" id="RHEA:24801"/>
        <dbReference type="ChEBI" id="CHEBI:16810"/>
        <dbReference type="ChEBI" id="CHEBI:29985"/>
        <dbReference type="ChEBI" id="CHEBI:35146"/>
        <dbReference type="ChEBI" id="CHEBI:58045"/>
        <dbReference type="EC" id="2.6.1.42"/>
    </reaction>
</comment>
<comment type="catalytic activity">
    <reaction>
        <text>L-valine + 2-oxoglutarate = 3-methyl-2-oxobutanoate + L-glutamate</text>
        <dbReference type="Rhea" id="RHEA:24813"/>
        <dbReference type="ChEBI" id="CHEBI:11851"/>
        <dbReference type="ChEBI" id="CHEBI:16810"/>
        <dbReference type="ChEBI" id="CHEBI:29985"/>
        <dbReference type="ChEBI" id="CHEBI:57762"/>
        <dbReference type="EC" id="2.6.1.42"/>
    </reaction>
</comment>
<comment type="catalytic activity">
    <reaction>
        <text>L-leucine + 2-oxoglutarate = 4-methyl-2-oxopentanoate + L-glutamate</text>
        <dbReference type="Rhea" id="RHEA:18321"/>
        <dbReference type="ChEBI" id="CHEBI:16810"/>
        <dbReference type="ChEBI" id="CHEBI:17865"/>
        <dbReference type="ChEBI" id="CHEBI:29985"/>
        <dbReference type="ChEBI" id="CHEBI:57427"/>
        <dbReference type="EC" id="2.6.1.42"/>
    </reaction>
</comment>
<comment type="cofactor">
    <cofactor evidence="2">
        <name>pyridoxal 5'-phosphate</name>
        <dbReference type="ChEBI" id="CHEBI:597326"/>
    </cofactor>
</comment>
<comment type="activity regulation">
    <text evidence="2">Inhibited by ammonium sulfate at millimolar concentrations and by O-benzylhydroxylamine (Obe).</text>
</comment>
<comment type="pathway">
    <text>Amino-acid biosynthesis; L-isoleucine biosynthesis; L-isoleucine from 2-oxobutanoate: step 4/4.</text>
</comment>
<comment type="pathway">
    <text>Amino-acid biosynthesis; L-leucine biosynthesis; L-leucine from 3-methyl-2-oxobutanoate: step 4/4.</text>
</comment>
<comment type="pathway">
    <text>Amino-acid biosynthesis; L-valine biosynthesis; L-valine from pyruvate: step 4/4.</text>
</comment>
<comment type="subunit">
    <text evidence="2">Homodimer.</text>
</comment>
<comment type="similarity">
    <text evidence="3">Belongs to the class-IV pyridoxal-phosphate-dependent aminotransferase family.</text>
</comment>
<sequence>MNSGPLEFTVSANTNPATDAVRESILANPGFGKYYTDHMVSIDYTVDEGWHNAQVIPYGPIQLDPSAIVLHYGQEIFEGLKAYRWADGSIVSFRPEANAARLQSSARRLAIPELPEEVFIESLRQLIAVDEKWVPPAGGEESLYLRPFVIATEPGLGVRPSNEYRYLLIASPAGAYFKGGIKPVSVWLSHEYVRASPGGTGAAKFGGNYAASLLAQAQAAEMGCDQVVWLDAIERRYVEEMGGMNLFFVFGSGGSARLVTPELSGSLLPGITRDSLLQLATDAGFAVEERKIDVDEWQKKAGAGEITEVFACGTAAVITPVSHVKHHDGEFTIADGQPGEITMALRDTLTGIQRGTFADTHGWMARLN</sequence>
<protein>
    <recommendedName>
        <fullName>Branched-chain-amino-acid aminotransferase</fullName>
        <shortName>BCAT</shortName>
        <ecNumber>2.6.1.42</ecNumber>
    </recommendedName>
</protein>